<feature type="signal peptide" evidence="3">
    <location>
        <begin position="1"/>
        <end position="16"/>
    </location>
</feature>
<feature type="chain" id="PRO_0000013516" description="Class II hydrophobin TH1">
    <location>
        <begin position="17"/>
        <end position="394"/>
    </location>
</feature>
<feature type="region of interest" description="Disordered" evidence="2">
    <location>
        <begin position="17"/>
        <end position="42"/>
    </location>
</feature>
<feature type="region of interest" description="Hydrophobin 1" evidence="3">
    <location>
        <begin position="48"/>
        <end position="117"/>
    </location>
</feature>
<feature type="region of interest" description="Disordered" evidence="2">
    <location>
        <begin position="135"/>
        <end position="157"/>
    </location>
</feature>
<feature type="region of interest" description="Hydrophobin 2" evidence="3">
    <location>
        <begin position="200"/>
        <end position="270"/>
    </location>
</feature>
<feature type="region of interest" description="Hydrophobin 3" evidence="3">
    <location>
        <begin position="326"/>
        <end position="394"/>
    </location>
</feature>
<feature type="compositionally biased region" description="Gly residues" evidence="2">
    <location>
        <begin position="33"/>
        <end position="42"/>
    </location>
</feature>
<feature type="compositionally biased region" description="Gly residues" evidence="2">
    <location>
        <begin position="148"/>
        <end position="157"/>
    </location>
</feature>
<feature type="disulfide bond" evidence="1">
    <location>
        <begin position="52"/>
        <end position="101"/>
    </location>
</feature>
<feature type="disulfide bond" evidence="1">
    <location>
        <begin position="62"/>
        <end position="92"/>
    </location>
</feature>
<feature type="disulfide bond" evidence="1">
    <location>
        <begin position="63"/>
        <end position="75"/>
    </location>
</feature>
<feature type="disulfide bond" evidence="1">
    <location>
        <begin position="102"/>
        <end position="113"/>
    </location>
</feature>
<comment type="function">
    <text evidence="3 4">Aerial growth, conidiation, and dispersal of filamentous fungi in the environment rely upon a capability of their secreting small amphipathic proteins called hydrophobins (HPBs) with low sequence identity. Class I can self-assemble into an outermost layer of rodlet bundles on aerial cell surfaces, conferring cellular hydrophobicity that supports fungal growth, development and dispersal; whereas Class II form highly ordered films at water-air interfaces through intermolecular interactions but contribute nothing to the rodlet structure (Probable). TH1 is a class II hydrophobin that reduces water surface tension dramatically upon assembly at the water-air interface and plays a role in the formation of aerial hyphae (PubMed:10336622).</text>
</comment>
<comment type="subunit">
    <text evidence="1 3">Homotetramer (By similarity). Further self-assembles to form highly ordered films at water-air interfaces through intermolecular interactions (PubMed:10336622).</text>
</comment>
<comment type="subcellular location">
    <subcellularLocation>
        <location evidence="3">Secreted</location>
        <location evidence="3">Cell wall</location>
    </subcellularLocation>
    <subcellularLocation>
        <location evidence="3">Secreted</location>
    </subcellularLocation>
</comment>
<comment type="PTM">
    <text evidence="3">Several N-termini starting at positions 17, 20, 22, 28 and 48 have been identified by direct sequencing.</text>
</comment>
<comment type="PTM">
    <text evidence="3">Contains a number of intrachain disulfide bonds.</text>
</comment>
<comment type="PTM">
    <text evidence="3">Not glycosylated.</text>
</comment>
<comment type="similarity">
    <text evidence="4">Belongs to the cerato-ulmin hydrophobin family.</text>
</comment>
<proteinExistence type="evidence at protein level"/>
<keyword id="KW-0134">Cell wall</keyword>
<keyword id="KW-0903">Direct protein sequencing</keyword>
<keyword id="KW-1015">Disulfide bond</keyword>
<keyword id="KW-0677">Repeat</keyword>
<keyword id="KW-0964">Secreted</keyword>
<keyword id="KW-0732">Signal</keyword>
<organism>
    <name type="scientific">Claviceps fusiformis</name>
    <name type="common">Ergot fungus</name>
    <dbReference type="NCBI Taxonomy" id="40602"/>
    <lineage>
        <taxon>Eukaryota</taxon>
        <taxon>Fungi</taxon>
        <taxon>Dikarya</taxon>
        <taxon>Ascomycota</taxon>
        <taxon>Pezizomycotina</taxon>
        <taxon>Sordariomycetes</taxon>
        <taxon>Hypocreomycetidae</taxon>
        <taxon>Hypocreales</taxon>
        <taxon>Clavicipitaceae</taxon>
        <taxon>Claviceps</taxon>
    </lineage>
</organism>
<evidence type="ECO:0000250" key="1">
    <source>
        <dbReference type="UniProtKB" id="P52754"/>
    </source>
</evidence>
<evidence type="ECO:0000256" key="2">
    <source>
        <dbReference type="SAM" id="MobiDB-lite"/>
    </source>
</evidence>
<evidence type="ECO:0000269" key="3">
    <source>
    </source>
</evidence>
<evidence type="ECO:0000305" key="4"/>
<dbReference type="EMBL" id="AJ133774">
    <property type="protein sequence ID" value="CAB61236.1"/>
    <property type="molecule type" value="mRNA"/>
</dbReference>
<dbReference type="SMR" id="Q9UVI4"/>
<dbReference type="GO" id="GO:0005576">
    <property type="term" value="C:extracellular region"/>
    <property type="evidence" value="ECO:0007669"/>
    <property type="project" value="UniProtKB-KW"/>
</dbReference>
<dbReference type="GO" id="GO:0030446">
    <property type="term" value="C:hyphal cell wall"/>
    <property type="evidence" value="ECO:0000314"/>
    <property type="project" value="UniProtKB"/>
</dbReference>
<dbReference type="GO" id="GO:0045230">
    <property type="term" value="P:capsule organization"/>
    <property type="evidence" value="ECO:0000314"/>
    <property type="project" value="UniProtKB"/>
</dbReference>
<dbReference type="GO" id="GO:0030448">
    <property type="term" value="P:hyphal growth"/>
    <property type="evidence" value="ECO:0000303"/>
    <property type="project" value="UniProtKB"/>
</dbReference>
<dbReference type="CDD" id="cd23508">
    <property type="entry name" value="hydrophobin_II"/>
    <property type="match status" value="3"/>
</dbReference>
<dbReference type="FunFam" id="3.20.120.10:FF:000001">
    <property type="entry name" value="Hydrophobin"/>
    <property type="match status" value="1"/>
</dbReference>
<dbReference type="Gene3D" id="3.20.120.10">
    <property type="entry name" value="Hydrophobin"/>
    <property type="match status" value="3"/>
</dbReference>
<dbReference type="InterPro" id="IPR010636">
    <property type="entry name" value="Cerato-ulmin_hydrophobin"/>
</dbReference>
<dbReference type="InterPro" id="IPR036686">
    <property type="entry name" value="Hydrophobin_sf"/>
</dbReference>
<dbReference type="PANTHER" id="PTHR42341">
    <property type="entry name" value="HYDROPHOBIN"/>
    <property type="match status" value="1"/>
</dbReference>
<dbReference type="PANTHER" id="PTHR42341:SF1">
    <property type="entry name" value="HYDROPHOBIN"/>
    <property type="match status" value="1"/>
</dbReference>
<dbReference type="Pfam" id="PF06766">
    <property type="entry name" value="Hydrophobin_2"/>
    <property type="match status" value="3"/>
</dbReference>
<dbReference type="PRINTS" id="PR01228">
    <property type="entry name" value="EGGSHELL"/>
</dbReference>
<dbReference type="SUPFAM" id="SSF101751">
    <property type="entry name" value="Hydrophobin II, HfbII"/>
    <property type="match status" value="3"/>
</dbReference>
<sequence>MKFLAAASLLVASTLAVPTSSGGSCRPRPPPGGGNGGNGGNGGNGGNGYQPCPAGLYSNPQCCATDVLGVADLDCKNPSSAPMSGDNFKSICNAVGQQAKCCVLPVAGQAVLCQDSINGGGNGGNNGGNGGNNGGNGGNNGGNTDYPGGNGGNNGGNNGGNNGGNNGGNNGGNNGGNNGGNNGGNNGGNNGGNGGNGGNGYQACPAGLLYSNPQCCSTGVLGVADLDCKNPSSAPTSGDDFQKICANGGQQAQCCSIPVAGQAVLCQPAIGGGNPGGNGGNNGGNGGNGGNNGGNNGGNGDYPGGNGGNNGGSNGGGNGGNGGNGGSFKCPSGLYSVPQCCATDVLGVADLDCGNPSRQPTDSSDFASVCAAKGQRARCCVLPLLGQAVLCTGA</sequence>
<name>THYD_CLAFS</name>
<protein>
    <recommendedName>
        <fullName>Class II hydrophobin TH1</fullName>
    </recommendedName>
    <alternativeName>
        <fullName>CFTH1</fullName>
    </alternativeName>
    <alternativeName>
        <fullName>Trihydrophobin</fullName>
    </alternativeName>
</protein>
<reference key="1">
    <citation type="journal article" date="1999" name="Eur. J. Biochem.">
        <title>Identification and characterization of a tri-partite hydrophobin from Claviceps fusiformis: a novel type of class II hydrophobin.</title>
        <authorList>
            <person name="de Vries O.M.H."/>
            <person name="Moore S."/>
            <person name="Arntz C."/>
            <person name="Wessels J.G.H."/>
            <person name="Tudzynski P."/>
        </authorList>
    </citation>
    <scope>NUCLEOTIDE SEQUENCE [MRNA]</scope>
    <scope>PARTIAL PROTEIN SEQUENCE</scope>
    <scope>FUNCTION</scope>
    <scope>SUBUNIT</scope>
    <scope>SUBCELLULAR LOCATION</scope>
    <scope>DOMAIN</scope>
    <source>
        <strain>ATCC 26245 / DSM 2942 / CBS 164.59</strain>
    </source>
</reference>
<reference key="2">
    <citation type="journal article" date="1997" name="Curr. Genet.">
        <title>Identification of genes induced in alkaloid-producing cultures of Claviceps sp.</title>
        <authorList>
            <person name="Arntz C."/>
            <person name="Tudzynski P."/>
        </authorList>
    </citation>
    <scope>PARTIAL NUCLEOTIDE SEQUENCE</scope>
    <source>
        <strain>ATCC 26245 / DSM 2942 / CBS 164.59</strain>
    </source>
</reference>
<gene>
    <name type="primary">TH1</name>
</gene>
<accession>Q9UVI4</accession>